<organism>
    <name type="scientific">Campylobacter jejuni subsp. jejuni serotype O:2 (strain ATCC 700819 / NCTC 11168)</name>
    <dbReference type="NCBI Taxonomy" id="192222"/>
    <lineage>
        <taxon>Bacteria</taxon>
        <taxon>Pseudomonadati</taxon>
        <taxon>Campylobacterota</taxon>
        <taxon>Epsilonproteobacteria</taxon>
        <taxon>Campylobacterales</taxon>
        <taxon>Campylobacteraceae</taxon>
        <taxon>Campylobacter</taxon>
    </lineage>
</organism>
<name>MRAY_CAMJE</name>
<reference key="1">
    <citation type="journal article" date="2000" name="Nature">
        <title>The genome sequence of the food-borne pathogen Campylobacter jejuni reveals hypervariable sequences.</title>
        <authorList>
            <person name="Parkhill J."/>
            <person name="Wren B.W."/>
            <person name="Mungall K.L."/>
            <person name="Ketley J.M."/>
            <person name="Churcher C.M."/>
            <person name="Basham D."/>
            <person name="Chillingworth T."/>
            <person name="Davies R.M."/>
            <person name="Feltwell T."/>
            <person name="Holroyd S."/>
            <person name="Jagels K."/>
            <person name="Karlyshev A.V."/>
            <person name="Moule S."/>
            <person name="Pallen M.J."/>
            <person name="Penn C.W."/>
            <person name="Quail M.A."/>
            <person name="Rajandream M.A."/>
            <person name="Rutherford K.M."/>
            <person name="van Vliet A.H.M."/>
            <person name="Whitehead S."/>
            <person name="Barrell B.G."/>
        </authorList>
    </citation>
    <scope>NUCLEOTIDE SEQUENCE [LARGE SCALE GENOMIC DNA]</scope>
    <source>
        <strain>ATCC 700819 / NCTC 11168</strain>
    </source>
</reference>
<accession>Q9PI72</accession>
<accession>Q0PB77</accession>
<evidence type="ECO:0000255" key="1">
    <source>
        <dbReference type="HAMAP-Rule" id="MF_00038"/>
    </source>
</evidence>
<sequence length="353" mass="39240">MYYLSDLSHYAFFTYISVRAGFAFFIALCLSLFLMPKFITWAKAKNASQPIYEYAPETHKTKCHTPTMGGLIFISSAVIASLFCIKFDNIFAISALLCLILFCLIGLIDDLGKVLKKDNHSGLSPRMKLLAQIIAGLICILPLYFSSELSTELFIPFYKHPLFDMEIFAIAFWILVLISSSNAVNLTDGLDGLATVPGIFSLSTLGIFLYLSGNLNYSEYLLLPKIQGLGEVVIICAALIGALMGFLWYNCYPAQVFMGDSGSLALGGFIGFLAVISKNEILLLLIGFVFVLETVSVILQVGSFKIFNKRVFKMAPIHHHFEKVGWVENKIIVRFWMIALLSNLLALASIKLR</sequence>
<feature type="chain" id="PRO_0000108801" description="Phospho-N-acetylmuramoyl-pentapeptide-transferase">
    <location>
        <begin position="1"/>
        <end position="353"/>
    </location>
</feature>
<feature type="transmembrane region" description="Helical" evidence="1">
    <location>
        <begin position="22"/>
        <end position="42"/>
    </location>
</feature>
<feature type="transmembrane region" description="Helical" evidence="1">
    <location>
        <begin position="65"/>
        <end position="85"/>
    </location>
</feature>
<feature type="transmembrane region" description="Helical" evidence="1">
    <location>
        <begin position="88"/>
        <end position="108"/>
    </location>
</feature>
<feature type="transmembrane region" description="Helical" evidence="1">
    <location>
        <begin position="129"/>
        <end position="149"/>
    </location>
</feature>
<feature type="transmembrane region" description="Helical" evidence="1">
    <location>
        <begin position="161"/>
        <end position="181"/>
    </location>
</feature>
<feature type="transmembrane region" description="Helical" evidence="1">
    <location>
        <begin position="192"/>
        <end position="212"/>
    </location>
</feature>
<feature type="transmembrane region" description="Helical" evidence="1">
    <location>
        <begin position="228"/>
        <end position="248"/>
    </location>
</feature>
<feature type="transmembrane region" description="Helical" evidence="1">
    <location>
        <begin position="256"/>
        <end position="276"/>
    </location>
</feature>
<feature type="transmembrane region" description="Helical" evidence="1">
    <location>
        <begin position="281"/>
        <end position="301"/>
    </location>
</feature>
<feature type="transmembrane region" description="Helical" evidence="1">
    <location>
        <begin position="330"/>
        <end position="350"/>
    </location>
</feature>
<proteinExistence type="inferred from homology"/>
<dbReference type="EC" id="2.7.8.13" evidence="1"/>
<dbReference type="EMBL" id="AL111168">
    <property type="protein sequence ID" value="CAL34583.1"/>
    <property type="molecule type" value="Genomic_DNA"/>
</dbReference>
<dbReference type="PIR" id="G81387">
    <property type="entry name" value="G81387"/>
</dbReference>
<dbReference type="RefSeq" id="WP_002858494.1">
    <property type="nucleotide sequence ID" value="NZ_SZUC01000002.1"/>
</dbReference>
<dbReference type="RefSeq" id="YP_002343870.1">
    <property type="nucleotide sequence ID" value="NC_002163.1"/>
</dbReference>
<dbReference type="SMR" id="Q9PI72"/>
<dbReference type="IntAct" id="Q9PI72">
    <property type="interactions" value="11"/>
</dbReference>
<dbReference type="STRING" id="192222.Cj0433c"/>
<dbReference type="PaxDb" id="192222-Cj0433c"/>
<dbReference type="EnsemblBacteria" id="CAL34583">
    <property type="protein sequence ID" value="CAL34583"/>
    <property type="gene ID" value="Cj0433c"/>
</dbReference>
<dbReference type="GeneID" id="904758"/>
<dbReference type="KEGG" id="cje:Cj0433c"/>
<dbReference type="PATRIC" id="fig|192222.6.peg.423"/>
<dbReference type="eggNOG" id="COG0472">
    <property type="taxonomic scope" value="Bacteria"/>
</dbReference>
<dbReference type="HOGENOM" id="CLU_023982_0_0_7"/>
<dbReference type="OrthoDB" id="9805475at2"/>
<dbReference type="UniPathway" id="UPA00219"/>
<dbReference type="Proteomes" id="UP000000799">
    <property type="component" value="Chromosome"/>
</dbReference>
<dbReference type="GO" id="GO:0005886">
    <property type="term" value="C:plasma membrane"/>
    <property type="evidence" value="ECO:0007669"/>
    <property type="project" value="UniProtKB-SubCell"/>
</dbReference>
<dbReference type="GO" id="GO:0046872">
    <property type="term" value="F:metal ion binding"/>
    <property type="evidence" value="ECO:0007669"/>
    <property type="project" value="UniProtKB-KW"/>
</dbReference>
<dbReference type="GO" id="GO:0008963">
    <property type="term" value="F:phospho-N-acetylmuramoyl-pentapeptide-transferase activity"/>
    <property type="evidence" value="ECO:0007669"/>
    <property type="project" value="UniProtKB-UniRule"/>
</dbReference>
<dbReference type="GO" id="GO:0051992">
    <property type="term" value="F:UDP-N-acetylmuramoyl-L-alanyl-D-glutamyl-meso-2,6-diaminopimelyl-D-alanyl-D-alanine:undecaprenyl-phosphate transferase activity"/>
    <property type="evidence" value="ECO:0007669"/>
    <property type="project" value="RHEA"/>
</dbReference>
<dbReference type="GO" id="GO:0051301">
    <property type="term" value="P:cell division"/>
    <property type="evidence" value="ECO:0007669"/>
    <property type="project" value="UniProtKB-KW"/>
</dbReference>
<dbReference type="GO" id="GO:0071555">
    <property type="term" value="P:cell wall organization"/>
    <property type="evidence" value="ECO:0007669"/>
    <property type="project" value="UniProtKB-KW"/>
</dbReference>
<dbReference type="GO" id="GO:0009252">
    <property type="term" value="P:peptidoglycan biosynthetic process"/>
    <property type="evidence" value="ECO:0007669"/>
    <property type="project" value="UniProtKB-UniRule"/>
</dbReference>
<dbReference type="GO" id="GO:0008360">
    <property type="term" value="P:regulation of cell shape"/>
    <property type="evidence" value="ECO:0007669"/>
    <property type="project" value="UniProtKB-KW"/>
</dbReference>
<dbReference type="CDD" id="cd06852">
    <property type="entry name" value="GT_MraY"/>
    <property type="match status" value="1"/>
</dbReference>
<dbReference type="HAMAP" id="MF_00038">
    <property type="entry name" value="MraY"/>
    <property type="match status" value="1"/>
</dbReference>
<dbReference type="InterPro" id="IPR000715">
    <property type="entry name" value="Glycosyl_transferase_4"/>
</dbReference>
<dbReference type="InterPro" id="IPR003524">
    <property type="entry name" value="PNAcMuramoyl-5peptid_Trfase"/>
</dbReference>
<dbReference type="InterPro" id="IPR018480">
    <property type="entry name" value="PNAcMuramoyl-5peptid_Trfase_CS"/>
</dbReference>
<dbReference type="NCBIfam" id="TIGR00445">
    <property type="entry name" value="mraY"/>
    <property type="match status" value="1"/>
</dbReference>
<dbReference type="PANTHER" id="PTHR22926">
    <property type="entry name" value="PHOSPHO-N-ACETYLMURAMOYL-PENTAPEPTIDE-TRANSFERASE"/>
    <property type="match status" value="1"/>
</dbReference>
<dbReference type="PANTHER" id="PTHR22926:SF5">
    <property type="entry name" value="PHOSPHO-N-ACETYLMURAMOYL-PENTAPEPTIDE-TRANSFERASE HOMOLOG"/>
    <property type="match status" value="1"/>
</dbReference>
<dbReference type="Pfam" id="PF00953">
    <property type="entry name" value="Glycos_transf_4"/>
    <property type="match status" value="1"/>
</dbReference>
<dbReference type="PROSITE" id="PS01347">
    <property type="entry name" value="MRAY_1"/>
    <property type="match status" value="1"/>
</dbReference>
<dbReference type="PROSITE" id="PS01348">
    <property type="entry name" value="MRAY_2"/>
    <property type="match status" value="1"/>
</dbReference>
<protein>
    <recommendedName>
        <fullName evidence="1">Phospho-N-acetylmuramoyl-pentapeptide-transferase</fullName>
        <ecNumber evidence="1">2.7.8.13</ecNumber>
    </recommendedName>
    <alternativeName>
        <fullName evidence="1">UDP-MurNAc-pentapeptide phosphotransferase</fullName>
    </alternativeName>
</protein>
<gene>
    <name evidence="1" type="primary">mraY</name>
    <name type="ordered locus">Cj0433c</name>
</gene>
<keyword id="KW-0131">Cell cycle</keyword>
<keyword id="KW-0132">Cell division</keyword>
<keyword id="KW-0997">Cell inner membrane</keyword>
<keyword id="KW-1003">Cell membrane</keyword>
<keyword id="KW-0133">Cell shape</keyword>
<keyword id="KW-0961">Cell wall biogenesis/degradation</keyword>
<keyword id="KW-0460">Magnesium</keyword>
<keyword id="KW-0472">Membrane</keyword>
<keyword id="KW-0479">Metal-binding</keyword>
<keyword id="KW-0573">Peptidoglycan synthesis</keyword>
<keyword id="KW-1185">Reference proteome</keyword>
<keyword id="KW-0808">Transferase</keyword>
<keyword id="KW-0812">Transmembrane</keyword>
<keyword id="KW-1133">Transmembrane helix</keyword>
<comment type="function">
    <text evidence="1">Catalyzes the initial step of the lipid cycle reactions in the biosynthesis of the cell wall peptidoglycan: transfers peptidoglycan precursor phospho-MurNAc-pentapeptide from UDP-MurNAc-pentapeptide onto the lipid carrier undecaprenyl phosphate, yielding undecaprenyl-pyrophosphoryl-MurNAc-pentapeptide, known as lipid I.</text>
</comment>
<comment type="catalytic activity">
    <reaction evidence="1">
        <text>UDP-N-acetyl-alpha-D-muramoyl-L-alanyl-gamma-D-glutamyl-meso-2,6-diaminopimeloyl-D-alanyl-D-alanine + di-trans,octa-cis-undecaprenyl phosphate = di-trans,octa-cis-undecaprenyl diphospho-N-acetyl-alpha-D-muramoyl-L-alanyl-D-glutamyl-meso-2,6-diaminopimeloyl-D-alanyl-D-alanine + UMP</text>
        <dbReference type="Rhea" id="RHEA:28386"/>
        <dbReference type="ChEBI" id="CHEBI:57865"/>
        <dbReference type="ChEBI" id="CHEBI:60392"/>
        <dbReference type="ChEBI" id="CHEBI:61386"/>
        <dbReference type="ChEBI" id="CHEBI:61387"/>
        <dbReference type="EC" id="2.7.8.13"/>
    </reaction>
</comment>
<comment type="cofactor">
    <cofactor evidence="1">
        <name>Mg(2+)</name>
        <dbReference type="ChEBI" id="CHEBI:18420"/>
    </cofactor>
</comment>
<comment type="pathway">
    <text evidence="1">Cell wall biogenesis; peptidoglycan biosynthesis.</text>
</comment>
<comment type="subcellular location">
    <subcellularLocation>
        <location evidence="1">Cell inner membrane</location>
        <topology evidence="1">Multi-pass membrane protein</topology>
    </subcellularLocation>
</comment>
<comment type="similarity">
    <text evidence="1">Belongs to the glycosyltransferase 4 family. MraY subfamily.</text>
</comment>